<proteinExistence type="inferred from homology"/>
<reference key="1">
    <citation type="journal article" date="2002" name="Proc. Natl. Acad. Sci. U.S.A.">
        <title>The Brucella suis genome reveals fundamental similarities between animal and plant pathogens and symbionts.</title>
        <authorList>
            <person name="Paulsen I.T."/>
            <person name="Seshadri R."/>
            <person name="Nelson K.E."/>
            <person name="Eisen J.A."/>
            <person name="Heidelberg J.F."/>
            <person name="Read T.D."/>
            <person name="Dodson R.J."/>
            <person name="Umayam L.A."/>
            <person name="Brinkac L.M."/>
            <person name="Beanan M.J."/>
            <person name="Daugherty S.C."/>
            <person name="DeBoy R.T."/>
            <person name="Durkin A.S."/>
            <person name="Kolonay J.F."/>
            <person name="Madupu R."/>
            <person name="Nelson W.C."/>
            <person name="Ayodeji B."/>
            <person name="Kraul M."/>
            <person name="Shetty J."/>
            <person name="Malek J.A."/>
            <person name="Van Aken S.E."/>
            <person name="Riedmuller S."/>
            <person name="Tettelin H."/>
            <person name="Gill S.R."/>
            <person name="White O."/>
            <person name="Salzberg S.L."/>
            <person name="Hoover D.L."/>
            <person name="Lindler L.E."/>
            <person name="Halling S.M."/>
            <person name="Boyle S.M."/>
            <person name="Fraser C.M."/>
        </authorList>
    </citation>
    <scope>NUCLEOTIDE SEQUENCE [LARGE SCALE GENOMIC DNA]</scope>
    <source>
        <strain>1330</strain>
    </source>
</reference>
<reference key="2">
    <citation type="journal article" date="2011" name="J. Bacteriol.">
        <title>Revised genome sequence of Brucella suis 1330.</title>
        <authorList>
            <person name="Tae H."/>
            <person name="Shallom S."/>
            <person name="Settlage R."/>
            <person name="Preston D."/>
            <person name="Adams L.G."/>
            <person name="Garner H.R."/>
        </authorList>
    </citation>
    <scope>NUCLEOTIDE SEQUENCE [LARGE SCALE GENOMIC DNA]</scope>
    <source>
        <strain>1330</strain>
    </source>
</reference>
<accession>Q8G180</accession>
<accession>G0K8Y8</accession>
<dbReference type="EC" id="6.3.5.3" evidence="1"/>
<dbReference type="EC" id="3.5.1.2" evidence="1"/>
<dbReference type="EMBL" id="AE014291">
    <property type="protein sequence ID" value="AAN29769.1"/>
    <property type="molecule type" value="Genomic_DNA"/>
</dbReference>
<dbReference type="EMBL" id="CP002997">
    <property type="protein sequence ID" value="AEM18186.1"/>
    <property type="molecule type" value="Genomic_DNA"/>
</dbReference>
<dbReference type="RefSeq" id="WP_004688252.1">
    <property type="nucleotide sequence ID" value="NZ_KN046804.1"/>
</dbReference>
<dbReference type="SMR" id="Q8G180"/>
<dbReference type="GeneID" id="97533859"/>
<dbReference type="KEGG" id="bms:BR0840"/>
<dbReference type="KEGG" id="bsi:BS1330_I0836"/>
<dbReference type="PATRIC" id="fig|204722.22.peg.1011"/>
<dbReference type="HOGENOM" id="CLU_001031_3_1_5"/>
<dbReference type="PhylomeDB" id="Q8G180"/>
<dbReference type="UniPathway" id="UPA00074">
    <property type="reaction ID" value="UER00128"/>
</dbReference>
<dbReference type="Proteomes" id="UP000007104">
    <property type="component" value="Chromosome I"/>
</dbReference>
<dbReference type="GO" id="GO:0005737">
    <property type="term" value="C:cytoplasm"/>
    <property type="evidence" value="ECO:0007669"/>
    <property type="project" value="UniProtKB-SubCell"/>
</dbReference>
<dbReference type="GO" id="GO:0005524">
    <property type="term" value="F:ATP binding"/>
    <property type="evidence" value="ECO:0007669"/>
    <property type="project" value="UniProtKB-KW"/>
</dbReference>
<dbReference type="GO" id="GO:0004359">
    <property type="term" value="F:glutaminase activity"/>
    <property type="evidence" value="ECO:0007669"/>
    <property type="project" value="UniProtKB-EC"/>
</dbReference>
<dbReference type="GO" id="GO:0004642">
    <property type="term" value="F:phosphoribosylformylglycinamidine synthase activity"/>
    <property type="evidence" value="ECO:0007669"/>
    <property type="project" value="UniProtKB-UniRule"/>
</dbReference>
<dbReference type="GO" id="GO:0006189">
    <property type="term" value="P:'de novo' IMP biosynthetic process"/>
    <property type="evidence" value="ECO:0007669"/>
    <property type="project" value="UniProtKB-UniRule"/>
</dbReference>
<dbReference type="CDD" id="cd01740">
    <property type="entry name" value="GATase1_FGAR_AT"/>
    <property type="match status" value="1"/>
</dbReference>
<dbReference type="Gene3D" id="3.40.50.880">
    <property type="match status" value="1"/>
</dbReference>
<dbReference type="HAMAP" id="MF_00421">
    <property type="entry name" value="PurQ"/>
    <property type="match status" value="1"/>
</dbReference>
<dbReference type="InterPro" id="IPR029062">
    <property type="entry name" value="Class_I_gatase-like"/>
</dbReference>
<dbReference type="InterPro" id="IPR010075">
    <property type="entry name" value="PRibForGlyAmidine_synth_PurQ"/>
</dbReference>
<dbReference type="NCBIfam" id="TIGR01737">
    <property type="entry name" value="FGAM_synth_I"/>
    <property type="match status" value="1"/>
</dbReference>
<dbReference type="NCBIfam" id="NF002957">
    <property type="entry name" value="PRK03619.1"/>
    <property type="match status" value="1"/>
</dbReference>
<dbReference type="PANTHER" id="PTHR47552">
    <property type="entry name" value="PHOSPHORIBOSYLFORMYLGLYCINAMIDINE SYNTHASE SUBUNIT PURQ"/>
    <property type="match status" value="1"/>
</dbReference>
<dbReference type="PANTHER" id="PTHR47552:SF1">
    <property type="entry name" value="PHOSPHORIBOSYLFORMYLGLYCINAMIDINE SYNTHASE SUBUNIT PURQ"/>
    <property type="match status" value="1"/>
</dbReference>
<dbReference type="Pfam" id="PF13507">
    <property type="entry name" value="GATase_5"/>
    <property type="match status" value="1"/>
</dbReference>
<dbReference type="PIRSF" id="PIRSF001586">
    <property type="entry name" value="FGAM_synth_I"/>
    <property type="match status" value="1"/>
</dbReference>
<dbReference type="SMART" id="SM01211">
    <property type="entry name" value="GATase_5"/>
    <property type="match status" value="1"/>
</dbReference>
<dbReference type="SUPFAM" id="SSF52317">
    <property type="entry name" value="Class I glutamine amidotransferase-like"/>
    <property type="match status" value="1"/>
</dbReference>
<dbReference type="PROSITE" id="PS51273">
    <property type="entry name" value="GATASE_TYPE_1"/>
    <property type="match status" value="1"/>
</dbReference>
<name>PURQ_BRUSU</name>
<sequence>MKSAVILLPGLNRDRDMIAALTKITGQAPVTVWQTDTSIPDDVDLILIPGGFSYGDYLRCGAIAARMPVMQAVREKADKGVMVMGVCNGFQILLEAGLLPGALMRNASLKFVCREVKLEVTNANTSFTRGYKPGQIIRCPVAHHDGNYFADAETLKRLEGEGQVVFRYAEGTNPNGSVNDIAGIVNARGNVLGMMPHPENLIEAAHGGDDGRALFAGALGITA</sequence>
<feature type="chain" id="PRO_0000100545" description="Phosphoribosylformylglycinamidine synthase subunit PurQ">
    <location>
        <begin position="1"/>
        <end position="223"/>
    </location>
</feature>
<feature type="domain" description="Glutamine amidotransferase type-1" evidence="1">
    <location>
        <begin position="3"/>
        <end position="223"/>
    </location>
</feature>
<feature type="active site" description="Nucleophile" evidence="1">
    <location>
        <position position="87"/>
    </location>
</feature>
<feature type="active site" evidence="1">
    <location>
        <position position="197"/>
    </location>
</feature>
<feature type="active site" evidence="1">
    <location>
        <position position="199"/>
    </location>
</feature>
<evidence type="ECO:0000255" key="1">
    <source>
        <dbReference type="HAMAP-Rule" id="MF_00421"/>
    </source>
</evidence>
<keyword id="KW-0067">ATP-binding</keyword>
<keyword id="KW-0963">Cytoplasm</keyword>
<keyword id="KW-0315">Glutamine amidotransferase</keyword>
<keyword id="KW-0378">Hydrolase</keyword>
<keyword id="KW-0436">Ligase</keyword>
<keyword id="KW-0547">Nucleotide-binding</keyword>
<keyword id="KW-0658">Purine biosynthesis</keyword>
<organism>
    <name type="scientific">Brucella suis biovar 1 (strain 1330)</name>
    <dbReference type="NCBI Taxonomy" id="204722"/>
    <lineage>
        <taxon>Bacteria</taxon>
        <taxon>Pseudomonadati</taxon>
        <taxon>Pseudomonadota</taxon>
        <taxon>Alphaproteobacteria</taxon>
        <taxon>Hyphomicrobiales</taxon>
        <taxon>Brucellaceae</taxon>
        <taxon>Brucella/Ochrobactrum group</taxon>
        <taxon>Brucella</taxon>
    </lineage>
</organism>
<gene>
    <name evidence="1" type="primary">purQ</name>
    <name type="ordered locus">BR0840</name>
    <name type="ordered locus">BS1330_I0836</name>
</gene>
<protein>
    <recommendedName>
        <fullName evidence="1">Phosphoribosylformylglycinamidine synthase subunit PurQ</fullName>
        <shortName evidence="1">FGAM synthase</shortName>
        <ecNumber evidence="1">6.3.5.3</ecNumber>
    </recommendedName>
    <alternativeName>
        <fullName evidence="1">Formylglycinamide ribonucleotide amidotransferase subunit I</fullName>
        <shortName evidence="1">FGAR amidotransferase I</shortName>
        <shortName evidence="1">FGAR-AT I</shortName>
    </alternativeName>
    <alternativeName>
        <fullName evidence="1">Glutaminase PurQ</fullName>
        <ecNumber evidence="1">3.5.1.2</ecNumber>
    </alternativeName>
    <alternativeName>
        <fullName evidence="1">Phosphoribosylformylglycinamidine synthase subunit I</fullName>
    </alternativeName>
</protein>
<comment type="function">
    <text evidence="1">Part of the phosphoribosylformylglycinamidine synthase complex involved in the purines biosynthetic pathway. Catalyzes the ATP-dependent conversion of formylglycinamide ribonucleotide (FGAR) and glutamine to yield formylglycinamidine ribonucleotide (FGAM) and glutamate. The FGAM synthase complex is composed of three subunits. PurQ produces an ammonia molecule by converting glutamine to glutamate. PurL transfers the ammonia molecule to FGAR to form FGAM in an ATP-dependent manner. PurS interacts with PurQ and PurL and is thought to assist in the transfer of the ammonia molecule from PurQ to PurL.</text>
</comment>
<comment type="catalytic activity">
    <reaction evidence="1">
        <text>N(2)-formyl-N(1)-(5-phospho-beta-D-ribosyl)glycinamide + L-glutamine + ATP + H2O = 2-formamido-N(1)-(5-O-phospho-beta-D-ribosyl)acetamidine + L-glutamate + ADP + phosphate + H(+)</text>
        <dbReference type="Rhea" id="RHEA:17129"/>
        <dbReference type="ChEBI" id="CHEBI:15377"/>
        <dbReference type="ChEBI" id="CHEBI:15378"/>
        <dbReference type="ChEBI" id="CHEBI:29985"/>
        <dbReference type="ChEBI" id="CHEBI:30616"/>
        <dbReference type="ChEBI" id="CHEBI:43474"/>
        <dbReference type="ChEBI" id="CHEBI:58359"/>
        <dbReference type="ChEBI" id="CHEBI:147286"/>
        <dbReference type="ChEBI" id="CHEBI:147287"/>
        <dbReference type="ChEBI" id="CHEBI:456216"/>
        <dbReference type="EC" id="6.3.5.3"/>
    </reaction>
</comment>
<comment type="catalytic activity">
    <reaction evidence="1">
        <text>L-glutamine + H2O = L-glutamate + NH4(+)</text>
        <dbReference type="Rhea" id="RHEA:15889"/>
        <dbReference type="ChEBI" id="CHEBI:15377"/>
        <dbReference type="ChEBI" id="CHEBI:28938"/>
        <dbReference type="ChEBI" id="CHEBI:29985"/>
        <dbReference type="ChEBI" id="CHEBI:58359"/>
        <dbReference type="EC" id="3.5.1.2"/>
    </reaction>
</comment>
<comment type="pathway">
    <text evidence="1">Purine metabolism; IMP biosynthesis via de novo pathway; 5-amino-1-(5-phospho-D-ribosyl)imidazole from N(2)-formyl-N(1)-(5-phospho-D-ribosyl)glycinamide: step 1/2.</text>
</comment>
<comment type="subunit">
    <text evidence="1">Part of the FGAM synthase complex composed of 1 PurL, 1 PurQ and 2 PurS subunits.</text>
</comment>
<comment type="subcellular location">
    <subcellularLocation>
        <location evidence="1">Cytoplasm</location>
    </subcellularLocation>
</comment>